<name>SPG21_DANRE</name>
<evidence type="ECO:0000250" key="1"/>
<evidence type="ECO:0000255" key="2"/>
<evidence type="ECO:0000305" key="3"/>
<gene>
    <name type="primary">spg21</name>
</gene>
<comment type="subcellular location">
    <subcellularLocation>
        <location evidence="1">Cytoplasm</location>
    </subcellularLocation>
</comment>
<comment type="similarity">
    <text evidence="3">Belongs to the AB hydrolase superfamily.</text>
</comment>
<feature type="chain" id="PRO_0000227985" description="Maspardin">
    <location>
        <begin position="1"/>
        <end position="311"/>
    </location>
</feature>
<feature type="domain" description="AB hydrolase-1" evidence="2">
    <location>
        <begin position="86"/>
        <end position="159"/>
    </location>
</feature>
<proteinExistence type="evidence at transcript level"/>
<dbReference type="EMBL" id="AY394947">
    <property type="protein sequence ID" value="AAQ94574.1"/>
    <property type="molecule type" value="mRNA"/>
</dbReference>
<dbReference type="EMBL" id="BC059461">
    <property type="protein sequence ID" value="AAH59461.1"/>
    <property type="molecule type" value="mRNA"/>
</dbReference>
<dbReference type="RefSeq" id="NP_998560.1">
    <property type="nucleotide sequence ID" value="NM_213395.1"/>
</dbReference>
<dbReference type="SMR" id="Q6PC62"/>
<dbReference type="FunCoup" id="Q6PC62">
    <property type="interactions" value="654"/>
</dbReference>
<dbReference type="STRING" id="7955.ENSDARP00000109573"/>
<dbReference type="ESTHER" id="danre-SPG21">
    <property type="family name" value="Maspardin-ACP33-SPG21_like"/>
</dbReference>
<dbReference type="PaxDb" id="7955-ENSDARP00000109573"/>
<dbReference type="GeneID" id="406704"/>
<dbReference type="KEGG" id="dre:406704"/>
<dbReference type="AGR" id="ZFIN:ZDB-GENE-040426-2722"/>
<dbReference type="CTD" id="51324"/>
<dbReference type="ZFIN" id="ZDB-GENE-040426-2722">
    <property type="gene designation" value="spg21"/>
</dbReference>
<dbReference type="eggNOG" id="ENOG502QPSD">
    <property type="taxonomic scope" value="Eukaryota"/>
</dbReference>
<dbReference type="InParanoid" id="Q6PC62"/>
<dbReference type="OrthoDB" id="10264550at2759"/>
<dbReference type="PhylomeDB" id="Q6PC62"/>
<dbReference type="PRO" id="PR:Q6PC62"/>
<dbReference type="Proteomes" id="UP000000437">
    <property type="component" value="Chromosome 7"/>
</dbReference>
<dbReference type="GO" id="GO:0005829">
    <property type="term" value="C:cytosol"/>
    <property type="evidence" value="ECO:0000250"/>
    <property type="project" value="UniProtKB"/>
</dbReference>
<dbReference type="GO" id="GO:0030140">
    <property type="term" value="C:trans-Golgi network transport vesicle"/>
    <property type="evidence" value="ECO:0000250"/>
    <property type="project" value="UniProtKB"/>
</dbReference>
<dbReference type="GO" id="GO:0042609">
    <property type="term" value="F:CD4 receptor binding"/>
    <property type="evidence" value="ECO:0000250"/>
    <property type="project" value="UniProtKB"/>
</dbReference>
<dbReference type="FunFam" id="3.40.50.1820:FF:000040">
    <property type="entry name" value="SPG21, maspardin"/>
    <property type="match status" value="1"/>
</dbReference>
<dbReference type="Gene3D" id="3.40.50.1820">
    <property type="entry name" value="alpha/beta hydrolase"/>
    <property type="match status" value="1"/>
</dbReference>
<dbReference type="InterPro" id="IPR000073">
    <property type="entry name" value="AB_hydrolase_1"/>
</dbReference>
<dbReference type="InterPro" id="IPR029058">
    <property type="entry name" value="AB_hydrolase_fold"/>
</dbReference>
<dbReference type="InterPro" id="IPR026151">
    <property type="entry name" value="Maspardin"/>
</dbReference>
<dbReference type="PANTHER" id="PTHR15913">
    <property type="entry name" value="ACID CLUSTER PROTEIN 33"/>
    <property type="match status" value="1"/>
</dbReference>
<dbReference type="PANTHER" id="PTHR15913:SF0">
    <property type="entry name" value="MASPARDIN"/>
    <property type="match status" value="1"/>
</dbReference>
<dbReference type="Pfam" id="PF00561">
    <property type="entry name" value="Abhydrolase_1"/>
    <property type="match status" value="1"/>
</dbReference>
<dbReference type="SUPFAM" id="SSF53474">
    <property type="entry name" value="alpha/beta-Hydrolases"/>
    <property type="match status" value="1"/>
</dbReference>
<keyword id="KW-0963">Cytoplasm</keyword>
<keyword id="KW-1185">Reference proteome</keyword>
<protein>
    <recommendedName>
        <fullName>Maspardin</fullName>
    </recommendedName>
    <alternativeName>
        <fullName>Spastic paraplegia 21 autosomal recessive Mast syndrome protein homolog</fullName>
    </alternativeName>
</protein>
<accession>Q6PC62</accession>
<organism>
    <name type="scientific">Danio rerio</name>
    <name type="common">Zebrafish</name>
    <name type="synonym">Brachydanio rerio</name>
    <dbReference type="NCBI Taxonomy" id="7955"/>
    <lineage>
        <taxon>Eukaryota</taxon>
        <taxon>Metazoa</taxon>
        <taxon>Chordata</taxon>
        <taxon>Craniata</taxon>
        <taxon>Vertebrata</taxon>
        <taxon>Euteleostomi</taxon>
        <taxon>Actinopterygii</taxon>
        <taxon>Neopterygii</taxon>
        <taxon>Teleostei</taxon>
        <taxon>Ostariophysi</taxon>
        <taxon>Cypriniformes</taxon>
        <taxon>Danionidae</taxon>
        <taxon>Danioninae</taxon>
        <taxon>Danio</taxon>
    </lineage>
</organism>
<reference key="1">
    <citation type="journal article" date="2004" name="Proc. Natl. Acad. Sci. U.S.A.">
        <title>Hematopoietic gene expression profile in zebrafish kidney marrow.</title>
        <authorList>
            <person name="Song H.-D."/>
            <person name="Sun X.-J."/>
            <person name="Deng M."/>
            <person name="Zhang G.-W."/>
            <person name="Zhou Y."/>
            <person name="Wu X.-Y."/>
            <person name="Sheng Y."/>
            <person name="Chen Y."/>
            <person name="Ruan Z."/>
            <person name="Jiang C.-L."/>
            <person name="Fan H.-Y."/>
            <person name="Zon L.I."/>
            <person name="Kanki J.P."/>
            <person name="Liu T.X."/>
            <person name="Look A.T."/>
            <person name="Chen Z."/>
        </authorList>
    </citation>
    <scope>NUCLEOTIDE SEQUENCE [LARGE SCALE MRNA]</scope>
    <source>
        <tissue>Kidney marrow</tissue>
    </source>
</reference>
<reference key="2">
    <citation type="submission" date="2003-10" db="EMBL/GenBank/DDBJ databases">
        <authorList>
            <consortium name="NIH - Zebrafish Gene Collection (ZGC) project"/>
        </authorList>
    </citation>
    <scope>NUCLEOTIDE SEQUENCE [LARGE SCALE MRNA]</scope>
    <source>
        <tissue>Eye</tissue>
    </source>
</reference>
<sequence length="311" mass="35571">MEEIRVSPDYNWFRSTVPLKRIIVDDDDSKVWSLYDAGPKSIRCPIIFLPPVSGTAEVFFQQVLALSGWGYRVISLQYPVYWDLLEFCDGFRKLLDHLQLDKVHLFGASLGGFLAQKFAEVTYKSPRVHSLVLCNSFSDTSIFNQTWTANSFWLMPSFMLKKIVLGNFAKGPVDPKMADAIDFMVDRLESLNQSELASRLTLNCQNSYVEPHKIKDIAVTIMDVFDQSALSQEAKEEMYKLYPNARRAHLKTGGNFPYLCRSAEVNLYIQIHLRQFHGTRYAAISPEMVSAEELEVQRTHLSNNSESEDES</sequence>